<keyword id="KW-0010">Activator</keyword>
<keyword id="KW-0932">Cytokinin signaling pathway</keyword>
<keyword id="KW-0238">DNA-binding</keyword>
<keyword id="KW-0539">Nucleus</keyword>
<keyword id="KW-0597">Phosphoprotein</keyword>
<keyword id="KW-1185">Reference proteome</keyword>
<keyword id="KW-0804">Transcription</keyword>
<keyword id="KW-0805">Transcription regulation</keyword>
<keyword id="KW-0902">Two-component regulatory system</keyword>
<accession>B8ASH8</accession>
<dbReference type="EMBL" id="CM000129">
    <property type="protein sequence ID" value="EEC77058.1"/>
    <property type="molecule type" value="Genomic_DNA"/>
</dbReference>
<dbReference type="SMR" id="B8ASH8"/>
<dbReference type="STRING" id="39946.B8ASH8"/>
<dbReference type="EnsemblPlants" id="BGIOSGA016167-TA">
    <property type="protein sequence ID" value="BGIOSGA016167-PA"/>
    <property type="gene ID" value="BGIOSGA016167"/>
</dbReference>
<dbReference type="Gramene" id="BGIOSGA016167-TA">
    <property type="protein sequence ID" value="BGIOSGA016167-PA"/>
    <property type="gene ID" value="BGIOSGA016167"/>
</dbReference>
<dbReference type="HOGENOM" id="CLU_770221_0_0_1"/>
<dbReference type="OMA" id="KKYYLMW"/>
<dbReference type="Proteomes" id="UP000007015">
    <property type="component" value="Chromosome 4"/>
</dbReference>
<dbReference type="GO" id="GO:0005634">
    <property type="term" value="C:nucleus"/>
    <property type="evidence" value="ECO:0007669"/>
    <property type="project" value="UniProtKB-SubCell"/>
</dbReference>
<dbReference type="GO" id="GO:0003677">
    <property type="term" value="F:DNA binding"/>
    <property type="evidence" value="ECO:0007669"/>
    <property type="project" value="UniProtKB-KW"/>
</dbReference>
<dbReference type="GO" id="GO:0009736">
    <property type="term" value="P:cytokinin-activated signaling pathway"/>
    <property type="evidence" value="ECO:0007669"/>
    <property type="project" value="UniProtKB-KW"/>
</dbReference>
<dbReference type="GO" id="GO:0000160">
    <property type="term" value="P:phosphorelay signal transduction system"/>
    <property type="evidence" value="ECO:0007669"/>
    <property type="project" value="UniProtKB-KW"/>
</dbReference>
<dbReference type="CDD" id="cd17584">
    <property type="entry name" value="REC_typeB_ARR-like"/>
    <property type="match status" value="1"/>
</dbReference>
<dbReference type="FunFam" id="1.10.10.60:FF:000007">
    <property type="entry name" value="Two-component response regulator"/>
    <property type="match status" value="1"/>
</dbReference>
<dbReference type="FunFam" id="3.40.50.2300:FF:000448">
    <property type="entry name" value="Two-component response regulator ORR29"/>
    <property type="match status" value="1"/>
</dbReference>
<dbReference type="Gene3D" id="3.40.50.2300">
    <property type="match status" value="1"/>
</dbReference>
<dbReference type="Gene3D" id="1.10.10.60">
    <property type="entry name" value="Homeodomain-like"/>
    <property type="match status" value="1"/>
</dbReference>
<dbReference type="InterPro" id="IPR045279">
    <property type="entry name" value="ARR-like"/>
</dbReference>
<dbReference type="InterPro" id="IPR011006">
    <property type="entry name" value="CheY-like_superfamily"/>
</dbReference>
<dbReference type="InterPro" id="IPR009057">
    <property type="entry name" value="Homeodomain-like_sf"/>
</dbReference>
<dbReference type="InterPro" id="IPR006447">
    <property type="entry name" value="Myb_dom_plants"/>
</dbReference>
<dbReference type="InterPro" id="IPR001789">
    <property type="entry name" value="Sig_transdc_resp-reg_receiver"/>
</dbReference>
<dbReference type="NCBIfam" id="TIGR01557">
    <property type="entry name" value="myb_SHAQKYF"/>
    <property type="match status" value="1"/>
</dbReference>
<dbReference type="PANTHER" id="PTHR43874">
    <property type="entry name" value="TWO-COMPONENT RESPONSE REGULATOR"/>
    <property type="match status" value="1"/>
</dbReference>
<dbReference type="PANTHER" id="PTHR43874:SF92">
    <property type="entry name" value="TWO-COMPONENT RESPONSE REGULATOR ORR28"/>
    <property type="match status" value="1"/>
</dbReference>
<dbReference type="Pfam" id="PF00072">
    <property type="entry name" value="Response_reg"/>
    <property type="match status" value="1"/>
</dbReference>
<dbReference type="SMART" id="SM00448">
    <property type="entry name" value="REC"/>
    <property type="match status" value="1"/>
</dbReference>
<dbReference type="SUPFAM" id="SSF52172">
    <property type="entry name" value="CheY-like"/>
    <property type="match status" value="1"/>
</dbReference>
<dbReference type="SUPFAM" id="SSF46689">
    <property type="entry name" value="Homeodomain-like"/>
    <property type="match status" value="1"/>
</dbReference>
<dbReference type="PROSITE" id="PS50110">
    <property type="entry name" value="RESPONSE_REGULATORY"/>
    <property type="match status" value="1"/>
</dbReference>
<name>ORR29_ORYSI</name>
<evidence type="ECO:0000250" key="1">
    <source>
        <dbReference type="UniProtKB" id="Q940D0"/>
    </source>
</evidence>
<evidence type="ECO:0000255" key="2">
    <source>
        <dbReference type="PROSITE-ProRule" id="PRU00169"/>
    </source>
</evidence>
<evidence type="ECO:0000255" key="3">
    <source>
        <dbReference type="PROSITE-ProRule" id="PRU00625"/>
    </source>
</evidence>
<evidence type="ECO:0000256" key="4">
    <source>
        <dbReference type="SAM" id="MobiDB-lite"/>
    </source>
</evidence>
<evidence type="ECO:0000305" key="5"/>
<evidence type="ECO:0000312" key="6">
    <source>
        <dbReference type="EMBL" id="EEC77058.1"/>
    </source>
</evidence>
<proteinExistence type="inferred from homology"/>
<feature type="chain" id="PRO_0000433854" description="Two-component response regulator ORR29">
    <location>
        <begin position="1"/>
        <end position="390"/>
    </location>
</feature>
<feature type="domain" description="Response regulatory" evidence="2">
    <location>
        <begin position="13"/>
        <end position="130"/>
    </location>
</feature>
<feature type="DNA-binding region" description="Myb-like GARP" evidence="3">
    <location>
        <begin position="169"/>
        <end position="226"/>
    </location>
</feature>
<feature type="region of interest" description="Disordered" evidence="4">
    <location>
        <begin position="233"/>
        <end position="271"/>
    </location>
</feature>
<feature type="region of interest" description="Disordered" evidence="4">
    <location>
        <begin position="303"/>
        <end position="339"/>
    </location>
</feature>
<feature type="compositionally biased region" description="Polar residues" evidence="4">
    <location>
        <begin position="257"/>
        <end position="271"/>
    </location>
</feature>
<feature type="modified residue" description="4-aspartylphosphate" evidence="2">
    <location>
        <position position="65"/>
    </location>
</feature>
<sequence>MAQKEGLPAGRLSAMVIDEDKCHADSTSYMLSAELNFSVTVFTSPIKALDFLQNHAEGVDLVLADVHMEEMNGFDFLKVARELHKSIQVIMMSTETTMYTMKRCVKLGAQFLVNKPLDAGTIKNLWQYVDLKVLRMEKIKDLLQGIGDESTCANETNSLAENPKNDTKKKYYLMWTPHLQKKFLHALQILGKDASPKNIKKIMGVDNIDCRQIAAHLQKHRLRLTKDLKKASFTTDTSKDESNSRIGPAESHHVCRNASTLQPRSNTQPTETTMQILSEDAEYDDVYAAMRRALQYGIVFDESKHSSDPSGDEDEQVVVGGDQDGCANEANDIDSSGDHHQVAAVVTKPCNTNASQEIINKMTNSDGMQATKGSKAAVFRLVDYSESDSD</sequence>
<gene>
    <name evidence="5" type="primary">RR29</name>
    <name evidence="6" type="ORF">OsI_15444</name>
</gene>
<organism>
    <name type="scientific">Oryza sativa subsp. indica</name>
    <name type="common">Rice</name>
    <dbReference type="NCBI Taxonomy" id="39946"/>
    <lineage>
        <taxon>Eukaryota</taxon>
        <taxon>Viridiplantae</taxon>
        <taxon>Streptophyta</taxon>
        <taxon>Embryophyta</taxon>
        <taxon>Tracheophyta</taxon>
        <taxon>Spermatophyta</taxon>
        <taxon>Magnoliopsida</taxon>
        <taxon>Liliopsida</taxon>
        <taxon>Poales</taxon>
        <taxon>Poaceae</taxon>
        <taxon>BOP clade</taxon>
        <taxon>Oryzoideae</taxon>
        <taxon>Oryzeae</taxon>
        <taxon>Oryzinae</taxon>
        <taxon>Oryza</taxon>
        <taxon>Oryza sativa</taxon>
    </lineage>
</organism>
<reference key="1">
    <citation type="journal article" date="2005" name="PLoS Biol.">
        <title>The genomes of Oryza sativa: a history of duplications.</title>
        <authorList>
            <person name="Yu J."/>
            <person name="Wang J."/>
            <person name="Lin W."/>
            <person name="Li S."/>
            <person name="Li H."/>
            <person name="Zhou J."/>
            <person name="Ni P."/>
            <person name="Dong W."/>
            <person name="Hu S."/>
            <person name="Zeng C."/>
            <person name="Zhang J."/>
            <person name="Zhang Y."/>
            <person name="Li R."/>
            <person name="Xu Z."/>
            <person name="Li S."/>
            <person name="Li X."/>
            <person name="Zheng H."/>
            <person name="Cong L."/>
            <person name="Lin L."/>
            <person name="Yin J."/>
            <person name="Geng J."/>
            <person name="Li G."/>
            <person name="Shi J."/>
            <person name="Liu J."/>
            <person name="Lv H."/>
            <person name="Li J."/>
            <person name="Wang J."/>
            <person name="Deng Y."/>
            <person name="Ran L."/>
            <person name="Shi X."/>
            <person name="Wang X."/>
            <person name="Wu Q."/>
            <person name="Li C."/>
            <person name="Ren X."/>
            <person name="Wang J."/>
            <person name="Wang X."/>
            <person name="Li D."/>
            <person name="Liu D."/>
            <person name="Zhang X."/>
            <person name="Ji Z."/>
            <person name="Zhao W."/>
            <person name="Sun Y."/>
            <person name="Zhang Z."/>
            <person name="Bao J."/>
            <person name="Han Y."/>
            <person name="Dong L."/>
            <person name="Ji J."/>
            <person name="Chen P."/>
            <person name="Wu S."/>
            <person name="Liu J."/>
            <person name="Xiao Y."/>
            <person name="Bu D."/>
            <person name="Tan J."/>
            <person name="Yang L."/>
            <person name="Ye C."/>
            <person name="Zhang J."/>
            <person name="Xu J."/>
            <person name="Zhou Y."/>
            <person name="Yu Y."/>
            <person name="Zhang B."/>
            <person name="Zhuang S."/>
            <person name="Wei H."/>
            <person name="Liu B."/>
            <person name="Lei M."/>
            <person name="Yu H."/>
            <person name="Li Y."/>
            <person name="Xu H."/>
            <person name="Wei S."/>
            <person name="He X."/>
            <person name="Fang L."/>
            <person name="Zhang Z."/>
            <person name="Zhang Y."/>
            <person name="Huang X."/>
            <person name="Su Z."/>
            <person name="Tong W."/>
            <person name="Li J."/>
            <person name="Tong Z."/>
            <person name="Li S."/>
            <person name="Ye J."/>
            <person name="Wang L."/>
            <person name="Fang L."/>
            <person name="Lei T."/>
            <person name="Chen C.-S."/>
            <person name="Chen H.-C."/>
            <person name="Xu Z."/>
            <person name="Li H."/>
            <person name="Huang H."/>
            <person name="Zhang F."/>
            <person name="Xu H."/>
            <person name="Li N."/>
            <person name="Zhao C."/>
            <person name="Li S."/>
            <person name="Dong L."/>
            <person name="Huang Y."/>
            <person name="Li L."/>
            <person name="Xi Y."/>
            <person name="Qi Q."/>
            <person name="Li W."/>
            <person name="Zhang B."/>
            <person name="Hu W."/>
            <person name="Zhang Y."/>
            <person name="Tian X."/>
            <person name="Jiao Y."/>
            <person name="Liang X."/>
            <person name="Jin J."/>
            <person name="Gao L."/>
            <person name="Zheng W."/>
            <person name="Hao B."/>
            <person name="Liu S.-M."/>
            <person name="Wang W."/>
            <person name="Yuan L."/>
            <person name="Cao M."/>
            <person name="McDermott J."/>
            <person name="Samudrala R."/>
            <person name="Wang J."/>
            <person name="Wong G.K.-S."/>
            <person name="Yang H."/>
        </authorList>
    </citation>
    <scope>NUCLEOTIDE SEQUENCE [LARGE SCALE GENOMIC DNA]</scope>
    <source>
        <strain>cv. 93-11</strain>
    </source>
</reference>
<protein>
    <recommendedName>
        <fullName evidence="5">Two-component response regulator ORR29</fullName>
    </recommendedName>
</protein>
<comment type="function">
    <text evidence="1">Transcriptional activator that binds specific DNA sequence. Functions as a response regulator involved in His-to-Asp phosphorelay signal transduction system. Phosphorylation of the Asp residue in the receiver domain activates the ability of the protein to promote the transcription of target genes. May directly activate some type-A response regulators in response to cytokinins.</text>
</comment>
<comment type="subcellular location">
    <subcellularLocation>
        <location evidence="3">Nucleus</location>
    </subcellularLocation>
</comment>
<comment type="PTM">
    <text evidence="5">Two-component system major event consists of a His-to-Asp phosphorelay between a sensor histidine kinase (HK) and a response regulator (RR). In plants, the His-to-Asp phosphorelay involves an additional intermediate named Histidine-containing phosphotransfer protein (HPt). This multistep phosphorelay consists of a His-Asp-His-Asp sequential transfer of a phosphate group between first a His and an Asp of the HK protein, followed by the transfer to a conserved His of the HPt protein and finally the transfer to an Asp in the receiver domain of the RR protein.</text>
</comment>
<comment type="similarity">
    <text evidence="5">Belongs to the ARR family. Type-B subfamily.</text>
</comment>